<dbReference type="EC" id="2.3.3.9"/>
<dbReference type="EMBL" id="AF013216">
    <property type="protein sequence ID" value="AAB97829.1"/>
    <property type="molecule type" value="Genomic_DNA"/>
</dbReference>
<dbReference type="EMBL" id="CP000113">
    <property type="protein sequence ID" value="ABF86861.1"/>
    <property type="molecule type" value="Genomic_DNA"/>
</dbReference>
<dbReference type="RefSeq" id="WP_011556373.1">
    <property type="nucleotide sequence ID" value="NC_008095.1"/>
</dbReference>
<dbReference type="SMR" id="P95329"/>
<dbReference type="STRING" id="246197.MXAN_6441"/>
<dbReference type="EnsemblBacteria" id="ABF86861">
    <property type="protein sequence ID" value="ABF86861"/>
    <property type="gene ID" value="MXAN_6441"/>
</dbReference>
<dbReference type="GeneID" id="41363650"/>
<dbReference type="KEGG" id="mxa:MXAN_6441"/>
<dbReference type="eggNOG" id="COG2225">
    <property type="taxonomic scope" value="Bacteria"/>
</dbReference>
<dbReference type="HOGENOM" id="CLU_018928_3_0_7"/>
<dbReference type="OrthoDB" id="9768429at2"/>
<dbReference type="UniPathway" id="UPA00703">
    <property type="reaction ID" value="UER00720"/>
</dbReference>
<dbReference type="Proteomes" id="UP000002402">
    <property type="component" value="Chromosome"/>
</dbReference>
<dbReference type="GO" id="GO:0005737">
    <property type="term" value="C:cytoplasm"/>
    <property type="evidence" value="ECO:0007669"/>
    <property type="project" value="UniProtKB-SubCell"/>
</dbReference>
<dbReference type="GO" id="GO:0004474">
    <property type="term" value="F:malate synthase activity"/>
    <property type="evidence" value="ECO:0007669"/>
    <property type="project" value="UniProtKB-EC"/>
</dbReference>
<dbReference type="GO" id="GO:0006097">
    <property type="term" value="P:glyoxylate cycle"/>
    <property type="evidence" value="ECO:0007669"/>
    <property type="project" value="UniProtKB-UniPathway"/>
</dbReference>
<dbReference type="GO" id="GO:0006099">
    <property type="term" value="P:tricarboxylic acid cycle"/>
    <property type="evidence" value="ECO:0007669"/>
    <property type="project" value="UniProtKB-KW"/>
</dbReference>
<dbReference type="CDD" id="cd00727">
    <property type="entry name" value="malate_synt_A"/>
    <property type="match status" value="1"/>
</dbReference>
<dbReference type="FunFam" id="1.20.1220.12:FF:000001">
    <property type="entry name" value="Malate synthase"/>
    <property type="match status" value="1"/>
</dbReference>
<dbReference type="FunFam" id="3.20.20.360:FF:000001">
    <property type="entry name" value="Malate synthase"/>
    <property type="match status" value="1"/>
</dbReference>
<dbReference type="Gene3D" id="3.20.20.360">
    <property type="entry name" value="Malate synthase, domain 3"/>
    <property type="match status" value="1"/>
</dbReference>
<dbReference type="Gene3D" id="1.20.1220.12">
    <property type="entry name" value="Malate synthase, domain III"/>
    <property type="match status" value="1"/>
</dbReference>
<dbReference type="InterPro" id="IPR044856">
    <property type="entry name" value="Malate_synth_C_sf"/>
</dbReference>
<dbReference type="InterPro" id="IPR011076">
    <property type="entry name" value="Malate_synth_sf"/>
</dbReference>
<dbReference type="InterPro" id="IPR006252">
    <property type="entry name" value="Malate_synthA"/>
</dbReference>
<dbReference type="InterPro" id="IPR019830">
    <property type="entry name" value="Malate_synthase_CS"/>
</dbReference>
<dbReference type="InterPro" id="IPR001465">
    <property type="entry name" value="Malate_synthase_TIM"/>
</dbReference>
<dbReference type="InterPro" id="IPR048355">
    <property type="entry name" value="MS_C"/>
</dbReference>
<dbReference type="InterPro" id="IPR048356">
    <property type="entry name" value="MS_N"/>
</dbReference>
<dbReference type="InterPro" id="IPR046363">
    <property type="entry name" value="MS_N_TIM-barrel_dom"/>
</dbReference>
<dbReference type="NCBIfam" id="TIGR01344">
    <property type="entry name" value="malate_syn_A"/>
    <property type="match status" value="1"/>
</dbReference>
<dbReference type="PANTHER" id="PTHR42902">
    <property type="entry name" value="MALATE SYNTHASE"/>
    <property type="match status" value="1"/>
</dbReference>
<dbReference type="PANTHER" id="PTHR42902:SF1">
    <property type="entry name" value="MALATE SYNTHASE 1-RELATED"/>
    <property type="match status" value="1"/>
</dbReference>
<dbReference type="Pfam" id="PF20659">
    <property type="entry name" value="MS_C"/>
    <property type="match status" value="1"/>
</dbReference>
<dbReference type="Pfam" id="PF20656">
    <property type="entry name" value="MS_N"/>
    <property type="match status" value="1"/>
</dbReference>
<dbReference type="Pfam" id="PF01274">
    <property type="entry name" value="MS_TIM-barrel"/>
    <property type="match status" value="1"/>
</dbReference>
<dbReference type="PIRSF" id="PIRSF001363">
    <property type="entry name" value="Malate_synth"/>
    <property type="match status" value="1"/>
</dbReference>
<dbReference type="SUPFAM" id="SSF51645">
    <property type="entry name" value="Malate synthase G"/>
    <property type="match status" value="1"/>
</dbReference>
<dbReference type="PROSITE" id="PS00510">
    <property type="entry name" value="MALATE_SYNTHASE"/>
    <property type="match status" value="1"/>
</dbReference>
<sequence>MSDQAPSVKPPAFGPGVVVKGTWHPDYAEVLTPEALEFVAKLARNFGERRLALLERRKTVQAAWSKGARPHFLPETKAVREGDWTVAPLPADLQDRRVEITGPVDRKMVINALNSGANVFMADFEDANSPTWDNVVRGQINLRDAVRGTISFTAENGKHYALNPKRAVLFVRPRGWHLPERHIEIDGKPISGSLLDFGLFFFHNAREQLARGTGPYFYLPKMQSHLEARLWNDVFHLAQAELGIPRGTIKATVLIETLPAAFEMDEILYELREHSAGLNCGRWDYIFSFIKTLQSDTRVVLPDRGQVTMDKAFLNAYSQLLIQTCHRRNVHAMGGMAAFIPIKGDAAANDAVMDKVRADKLREVKNGHDGTWVAHPGLVEIARDIFDSHMKGPNQLSNKREDVKIGEAELLKVPSGTRTEEGLRHNIRVGIQYTAAWLGGLGCVPLYNLMEDAATAEISRAQVWQWIHHGASLEDGRKVTLTLFRDALGEEMGRLEKEGAKERYGAAHLERARVLFEQLSTAGTFEDFLTLPAYDALEAQR</sequence>
<reference key="1">
    <citation type="submission" date="1997-07" db="EMBL/GenBank/DDBJ databases">
        <title>Myxococcus xanthus fumarate hydratase, major proteosome subunit, and acyl-CoA oxidase genes.</title>
        <authorList>
            <person name="Salmi D."/>
            <person name="Creighton C."/>
            <person name="Youderian P."/>
        </authorList>
    </citation>
    <scope>NUCLEOTIDE SEQUENCE [GENOMIC DNA]</scope>
</reference>
<reference key="2">
    <citation type="journal article" date="2006" name="Proc. Natl. Acad. Sci. U.S.A.">
        <title>Evolution of sensory complexity recorded in a myxobacterial genome.</title>
        <authorList>
            <person name="Goldman B.S."/>
            <person name="Nierman W.C."/>
            <person name="Kaiser D."/>
            <person name="Slater S.C."/>
            <person name="Durkin A.S."/>
            <person name="Eisen J.A."/>
            <person name="Ronning C.M."/>
            <person name="Barbazuk W.B."/>
            <person name="Blanchard M."/>
            <person name="Field C."/>
            <person name="Halling C."/>
            <person name="Hinkle G."/>
            <person name="Iartchuk O."/>
            <person name="Kim H.S."/>
            <person name="Mackenzie C."/>
            <person name="Madupu R."/>
            <person name="Miller N."/>
            <person name="Shvartsbeyn A."/>
            <person name="Sullivan S.A."/>
            <person name="Vaudin M."/>
            <person name="Wiegand R."/>
            <person name="Kaplan H.B."/>
        </authorList>
    </citation>
    <scope>NUCLEOTIDE SEQUENCE [LARGE SCALE GENOMIC DNA]</scope>
    <source>
        <strain>DK1622</strain>
    </source>
</reference>
<protein>
    <recommendedName>
        <fullName>Malate synthase</fullName>
        <ecNumber>2.3.3.9</ecNumber>
    </recommendedName>
</protein>
<proteinExistence type="inferred from homology"/>
<comment type="catalytic activity">
    <reaction>
        <text>glyoxylate + acetyl-CoA + H2O = (S)-malate + CoA + H(+)</text>
        <dbReference type="Rhea" id="RHEA:18181"/>
        <dbReference type="ChEBI" id="CHEBI:15377"/>
        <dbReference type="ChEBI" id="CHEBI:15378"/>
        <dbReference type="ChEBI" id="CHEBI:15589"/>
        <dbReference type="ChEBI" id="CHEBI:36655"/>
        <dbReference type="ChEBI" id="CHEBI:57287"/>
        <dbReference type="ChEBI" id="CHEBI:57288"/>
        <dbReference type="EC" id="2.3.3.9"/>
    </reaction>
</comment>
<comment type="pathway">
    <text>Carbohydrate metabolism; glyoxylate cycle; (S)-malate from isocitrate: step 2/2.</text>
</comment>
<comment type="subcellular location">
    <subcellularLocation>
        <location evidence="1">Cytoplasm</location>
    </subcellularLocation>
</comment>
<comment type="similarity">
    <text evidence="2">Belongs to the malate synthase family.</text>
</comment>
<gene>
    <name type="primary">mls</name>
    <name type="ordered locus">MXAN_6441</name>
</gene>
<organism>
    <name type="scientific">Myxococcus xanthus (strain DK1622)</name>
    <dbReference type="NCBI Taxonomy" id="246197"/>
    <lineage>
        <taxon>Bacteria</taxon>
        <taxon>Pseudomonadati</taxon>
        <taxon>Myxococcota</taxon>
        <taxon>Myxococcia</taxon>
        <taxon>Myxococcales</taxon>
        <taxon>Cystobacterineae</taxon>
        <taxon>Myxococcaceae</taxon>
        <taxon>Myxococcus</taxon>
    </lineage>
</organism>
<accession>P95329</accession>
<accession>Q1CYF8</accession>
<name>MASY_MYXXD</name>
<evidence type="ECO:0000250" key="1"/>
<evidence type="ECO:0000305" key="2"/>
<keyword id="KW-0963">Cytoplasm</keyword>
<keyword id="KW-0329">Glyoxylate bypass</keyword>
<keyword id="KW-1185">Reference proteome</keyword>
<keyword id="KW-0808">Transferase</keyword>
<keyword id="KW-0816">Tricarboxylic acid cycle</keyword>
<feature type="chain" id="PRO_0000166876" description="Malate synthase">
    <location>
        <begin position="1"/>
        <end position="541"/>
    </location>
</feature>
<feature type="active site" description="Proton acceptor" evidence="1">
    <location>
        <position position="172"/>
    </location>
</feature>
<feature type="active site" description="Proton donor" evidence="1">
    <location>
        <position position="452"/>
    </location>
</feature>
<feature type="sequence conflict" description="In Ref. 1; AAB97829." evidence="2" ref="1">
    <original>D</original>
    <variation>E</variation>
    <location>
        <position position="95"/>
    </location>
</feature>
<feature type="sequence conflict" description="In Ref. 1; AAB97829." evidence="2" ref="1">
    <original>I</original>
    <variation>L</variation>
    <location>
        <position position="385"/>
    </location>
</feature>
<feature type="sequence conflict" description="In Ref. 1; AAB97829." evidence="2" ref="1">
    <original>N</original>
    <variation>D</variation>
    <location>
        <position position="398"/>
    </location>
</feature>